<keyword id="KW-0004">4Fe-4S</keyword>
<keyword id="KW-0963">Cytoplasm</keyword>
<keyword id="KW-0408">Iron</keyword>
<keyword id="KW-0411">Iron-sulfur</keyword>
<keyword id="KW-0479">Metal-binding</keyword>
<keyword id="KW-0949">S-adenosyl-L-methionine</keyword>
<keyword id="KW-0808">Transferase</keyword>
<keyword id="KW-0819">tRNA processing</keyword>
<proteinExistence type="inferred from homology"/>
<comment type="function">
    <text evidence="1">Catalyzes the methylthiolation of N6-(dimethylallyl)adenosine (i(6)A), leading to the formation of 2-methylthio-N6-(dimethylallyl)adenosine (ms(2)i(6)A) at position 37 in tRNAs that read codons beginning with uridine.</text>
</comment>
<comment type="catalytic activity">
    <reaction evidence="1">
        <text>N(6)-dimethylallyladenosine(37) in tRNA + (sulfur carrier)-SH + AH2 + 2 S-adenosyl-L-methionine = 2-methylsulfanyl-N(6)-dimethylallyladenosine(37) in tRNA + (sulfur carrier)-H + 5'-deoxyadenosine + L-methionine + A + S-adenosyl-L-homocysteine + 2 H(+)</text>
        <dbReference type="Rhea" id="RHEA:37067"/>
        <dbReference type="Rhea" id="RHEA-COMP:10375"/>
        <dbReference type="Rhea" id="RHEA-COMP:10376"/>
        <dbReference type="Rhea" id="RHEA-COMP:14737"/>
        <dbReference type="Rhea" id="RHEA-COMP:14739"/>
        <dbReference type="ChEBI" id="CHEBI:13193"/>
        <dbReference type="ChEBI" id="CHEBI:15378"/>
        <dbReference type="ChEBI" id="CHEBI:17319"/>
        <dbReference type="ChEBI" id="CHEBI:17499"/>
        <dbReference type="ChEBI" id="CHEBI:29917"/>
        <dbReference type="ChEBI" id="CHEBI:57844"/>
        <dbReference type="ChEBI" id="CHEBI:57856"/>
        <dbReference type="ChEBI" id="CHEBI:59789"/>
        <dbReference type="ChEBI" id="CHEBI:64428"/>
        <dbReference type="ChEBI" id="CHEBI:74415"/>
        <dbReference type="ChEBI" id="CHEBI:74417"/>
        <dbReference type="EC" id="2.8.4.3"/>
    </reaction>
</comment>
<comment type="cofactor">
    <cofactor evidence="1">
        <name>[4Fe-4S] cluster</name>
        <dbReference type="ChEBI" id="CHEBI:49883"/>
    </cofactor>
    <text evidence="1">Binds 2 [4Fe-4S] clusters. One cluster is coordinated with 3 cysteines and an exchangeable S-adenosyl-L-methionine.</text>
</comment>
<comment type="subunit">
    <text evidence="1">Monomer.</text>
</comment>
<comment type="subcellular location">
    <subcellularLocation>
        <location evidence="1">Cytoplasm</location>
    </subcellularLocation>
</comment>
<comment type="similarity">
    <text evidence="1">Belongs to the methylthiotransferase family. MiaB subfamily.</text>
</comment>
<comment type="sequence caution" evidence="3">
    <conflict type="erroneous initiation">
        <sequence resource="EMBL-CDS" id="CAJ99349"/>
    </conflict>
</comment>
<gene>
    <name evidence="1" type="primary">miaB</name>
    <name type="ordered locus">Hac_0527</name>
</gene>
<accession>Q17YC7</accession>
<reference key="1">
    <citation type="journal article" date="2006" name="PLoS Genet.">
        <title>Who ate whom? Adaptive Helicobacter genomic changes that accompanied a host jump from early humans to large felines.</title>
        <authorList>
            <person name="Eppinger M."/>
            <person name="Baar C."/>
            <person name="Linz B."/>
            <person name="Raddatz G."/>
            <person name="Lanz C."/>
            <person name="Keller H."/>
            <person name="Morelli G."/>
            <person name="Gressmann H."/>
            <person name="Achtman M."/>
            <person name="Schuster S.C."/>
        </authorList>
    </citation>
    <scope>NUCLEOTIDE SEQUENCE [LARGE SCALE GENOMIC DNA]</scope>
    <source>
        <strain>Sheeba</strain>
    </source>
</reference>
<feature type="chain" id="PRO_0000374335" description="tRNA-2-methylthio-N(6)-dimethylallyladenosine synthase">
    <location>
        <begin position="1"/>
        <end position="439"/>
    </location>
</feature>
<feature type="domain" description="MTTase N-terminal" evidence="1">
    <location>
        <begin position="2"/>
        <end position="116"/>
    </location>
</feature>
<feature type="domain" description="Radical SAM core" evidence="2">
    <location>
        <begin position="135"/>
        <end position="368"/>
    </location>
</feature>
<feature type="domain" description="TRAM" evidence="1">
    <location>
        <begin position="371"/>
        <end position="437"/>
    </location>
</feature>
<feature type="binding site" evidence="1">
    <location>
        <position position="11"/>
    </location>
    <ligand>
        <name>[4Fe-4S] cluster</name>
        <dbReference type="ChEBI" id="CHEBI:49883"/>
        <label>1</label>
    </ligand>
</feature>
<feature type="binding site" evidence="1">
    <location>
        <position position="47"/>
    </location>
    <ligand>
        <name>[4Fe-4S] cluster</name>
        <dbReference type="ChEBI" id="CHEBI:49883"/>
        <label>1</label>
    </ligand>
</feature>
<feature type="binding site" evidence="1">
    <location>
        <position position="79"/>
    </location>
    <ligand>
        <name>[4Fe-4S] cluster</name>
        <dbReference type="ChEBI" id="CHEBI:49883"/>
        <label>1</label>
    </ligand>
</feature>
<feature type="binding site" evidence="1">
    <location>
        <position position="149"/>
    </location>
    <ligand>
        <name>[4Fe-4S] cluster</name>
        <dbReference type="ChEBI" id="CHEBI:49883"/>
        <label>2</label>
        <note>4Fe-4S-S-AdoMet</note>
    </ligand>
</feature>
<feature type="binding site" evidence="1">
    <location>
        <position position="153"/>
    </location>
    <ligand>
        <name>[4Fe-4S] cluster</name>
        <dbReference type="ChEBI" id="CHEBI:49883"/>
        <label>2</label>
        <note>4Fe-4S-S-AdoMet</note>
    </ligand>
</feature>
<feature type="binding site" evidence="1">
    <location>
        <position position="156"/>
    </location>
    <ligand>
        <name>[4Fe-4S] cluster</name>
        <dbReference type="ChEBI" id="CHEBI:49883"/>
        <label>2</label>
        <note>4Fe-4S-S-AdoMet</note>
    </ligand>
</feature>
<sequence length="439" mass="49785">MLKVYIETMGCAMNSRDSEHLLSELSKLDYKETNDPKIADLILINTCSVREKPERKLFSEIGQFAKIKKPNAKIGVCGCTASHMGADILKKSPSVSFVLGARNVSKISQVIHKEKAVEVAIDYDESSYAFEFFEKKAEVRSLLNISIGCDKKCTYCIVPHTRGKEISIPMDLILKEAEKLANNGTKELMLLGQNVNNYGVRFSSEHAKVNFSDLLDKLSEIPGIERIRFTSPHPLHMNDEFLERFAKNPKVCKSIHMPLQSGSSAVLKMMRRGYNKEWFLNRVEKLKALVPEVGISTDIIVGFPNESDKDFEDTMEVLEKVCFDTLYSFIYSPRPFTEAGAWKERVPLEVSSLRLERLQNRHKEILEEKARLEVGKTHVVLVENRHEVDGQIVGFEGRSDTGKFIEVTCKEKRNPGELVEVEIISHVKGRLMATTKNNQ</sequence>
<evidence type="ECO:0000255" key="1">
    <source>
        <dbReference type="HAMAP-Rule" id="MF_01864"/>
    </source>
</evidence>
<evidence type="ECO:0000255" key="2">
    <source>
        <dbReference type="PROSITE-ProRule" id="PRU01266"/>
    </source>
</evidence>
<evidence type="ECO:0000305" key="3"/>
<dbReference type="EC" id="2.8.4.3" evidence="1"/>
<dbReference type="EMBL" id="AM260522">
    <property type="protein sequence ID" value="CAJ99349.1"/>
    <property type="status" value="ALT_INIT"/>
    <property type="molecule type" value="Genomic_DNA"/>
</dbReference>
<dbReference type="SMR" id="Q17YC7"/>
<dbReference type="STRING" id="382638.Hac_0527"/>
<dbReference type="KEGG" id="hac:Hac_0527"/>
<dbReference type="eggNOG" id="COG0621">
    <property type="taxonomic scope" value="Bacteria"/>
</dbReference>
<dbReference type="HOGENOM" id="CLU_018697_2_0_7"/>
<dbReference type="Proteomes" id="UP000000775">
    <property type="component" value="Chromosome"/>
</dbReference>
<dbReference type="GO" id="GO:0005829">
    <property type="term" value="C:cytosol"/>
    <property type="evidence" value="ECO:0007669"/>
    <property type="project" value="TreeGrafter"/>
</dbReference>
<dbReference type="GO" id="GO:0051539">
    <property type="term" value="F:4 iron, 4 sulfur cluster binding"/>
    <property type="evidence" value="ECO:0007669"/>
    <property type="project" value="UniProtKB-UniRule"/>
</dbReference>
<dbReference type="GO" id="GO:0046872">
    <property type="term" value="F:metal ion binding"/>
    <property type="evidence" value="ECO:0007669"/>
    <property type="project" value="UniProtKB-KW"/>
</dbReference>
<dbReference type="GO" id="GO:0035597">
    <property type="term" value="F:N6-isopentenyladenosine methylthiotransferase activity"/>
    <property type="evidence" value="ECO:0007669"/>
    <property type="project" value="TreeGrafter"/>
</dbReference>
<dbReference type="CDD" id="cd01335">
    <property type="entry name" value="Radical_SAM"/>
    <property type="match status" value="1"/>
</dbReference>
<dbReference type="FunFam" id="3.40.50.12160:FF:000003">
    <property type="entry name" value="CDK5 regulatory subunit-associated protein 1"/>
    <property type="match status" value="1"/>
</dbReference>
<dbReference type="FunFam" id="3.80.30.20:FF:000013">
    <property type="entry name" value="tRNA-2-methylthio-N(6)-dimethylallyladenosine synthase"/>
    <property type="match status" value="1"/>
</dbReference>
<dbReference type="Gene3D" id="3.40.50.12160">
    <property type="entry name" value="Methylthiotransferase, N-terminal domain"/>
    <property type="match status" value="1"/>
</dbReference>
<dbReference type="Gene3D" id="3.80.30.20">
    <property type="entry name" value="tm_1862 like domain"/>
    <property type="match status" value="1"/>
</dbReference>
<dbReference type="HAMAP" id="MF_01864">
    <property type="entry name" value="tRNA_metthiotr_MiaB"/>
    <property type="match status" value="1"/>
</dbReference>
<dbReference type="InterPro" id="IPR006638">
    <property type="entry name" value="Elp3/MiaA/NifB-like_rSAM"/>
</dbReference>
<dbReference type="InterPro" id="IPR005839">
    <property type="entry name" value="Methylthiotransferase"/>
</dbReference>
<dbReference type="InterPro" id="IPR020612">
    <property type="entry name" value="Methylthiotransferase_CS"/>
</dbReference>
<dbReference type="InterPro" id="IPR013848">
    <property type="entry name" value="Methylthiotransferase_N"/>
</dbReference>
<dbReference type="InterPro" id="IPR038135">
    <property type="entry name" value="Methylthiotransferase_N_sf"/>
</dbReference>
<dbReference type="InterPro" id="IPR006463">
    <property type="entry name" value="MiaB_methiolase"/>
</dbReference>
<dbReference type="InterPro" id="IPR007197">
    <property type="entry name" value="rSAM"/>
</dbReference>
<dbReference type="InterPro" id="IPR023404">
    <property type="entry name" value="rSAM_horseshoe"/>
</dbReference>
<dbReference type="InterPro" id="IPR002792">
    <property type="entry name" value="TRAM_dom"/>
</dbReference>
<dbReference type="NCBIfam" id="TIGR01574">
    <property type="entry name" value="miaB-methiolase"/>
    <property type="match status" value="1"/>
</dbReference>
<dbReference type="NCBIfam" id="TIGR00089">
    <property type="entry name" value="MiaB/RimO family radical SAM methylthiotransferase"/>
    <property type="match status" value="1"/>
</dbReference>
<dbReference type="PANTHER" id="PTHR43020">
    <property type="entry name" value="CDK5 REGULATORY SUBUNIT-ASSOCIATED PROTEIN 1"/>
    <property type="match status" value="1"/>
</dbReference>
<dbReference type="PANTHER" id="PTHR43020:SF2">
    <property type="entry name" value="MITOCHONDRIAL TRNA METHYLTHIOTRANSFERASE CDK5RAP1"/>
    <property type="match status" value="1"/>
</dbReference>
<dbReference type="Pfam" id="PF04055">
    <property type="entry name" value="Radical_SAM"/>
    <property type="match status" value="1"/>
</dbReference>
<dbReference type="Pfam" id="PF00919">
    <property type="entry name" value="UPF0004"/>
    <property type="match status" value="1"/>
</dbReference>
<dbReference type="SFLD" id="SFLDF00273">
    <property type="entry name" value="(dimethylallyl)adenosine_tRNA"/>
    <property type="match status" value="1"/>
</dbReference>
<dbReference type="SFLD" id="SFLDG01082">
    <property type="entry name" value="B12-binding_domain_containing"/>
    <property type="match status" value="1"/>
</dbReference>
<dbReference type="SFLD" id="SFLDS00029">
    <property type="entry name" value="Radical_SAM"/>
    <property type="match status" value="1"/>
</dbReference>
<dbReference type="SMART" id="SM00729">
    <property type="entry name" value="Elp3"/>
    <property type="match status" value="1"/>
</dbReference>
<dbReference type="SUPFAM" id="SSF102114">
    <property type="entry name" value="Radical SAM enzymes"/>
    <property type="match status" value="1"/>
</dbReference>
<dbReference type="PROSITE" id="PS51449">
    <property type="entry name" value="MTTASE_N"/>
    <property type="match status" value="1"/>
</dbReference>
<dbReference type="PROSITE" id="PS01278">
    <property type="entry name" value="MTTASE_RADICAL"/>
    <property type="match status" value="1"/>
</dbReference>
<dbReference type="PROSITE" id="PS51918">
    <property type="entry name" value="RADICAL_SAM"/>
    <property type="match status" value="1"/>
</dbReference>
<dbReference type="PROSITE" id="PS50926">
    <property type="entry name" value="TRAM"/>
    <property type="match status" value="1"/>
</dbReference>
<organism>
    <name type="scientific">Helicobacter acinonychis (strain Sheeba)</name>
    <dbReference type="NCBI Taxonomy" id="382638"/>
    <lineage>
        <taxon>Bacteria</taxon>
        <taxon>Pseudomonadati</taxon>
        <taxon>Campylobacterota</taxon>
        <taxon>Epsilonproteobacteria</taxon>
        <taxon>Campylobacterales</taxon>
        <taxon>Helicobacteraceae</taxon>
        <taxon>Helicobacter</taxon>
    </lineage>
</organism>
<protein>
    <recommendedName>
        <fullName evidence="1">tRNA-2-methylthio-N(6)-dimethylallyladenosine synthase</fullName>
        <ecNumber evidence="1">2.8.4.3</ecNumber>
    </recommendedName>
    <alternativeName>
        <fullName evidence="1">(Dimethylallyl)adenosine tRNA methylthiotransferase MiaB</fullName>
    </alternativeName>
    <alternativeName>
        <fullName evidence="1">tRNA-i(6)A37 methylthiotransferase</fullName>
    </alternativeName>
</protein>
<name>MIAB_HELAH</name>